<keyword id="KW-0066">ATP synthesis</keyword>
<keyword id="KW-0997">Cell inner membrane</keyword>
<keyword id="KW-1003">Cell membrane</keyword>
<keyword id="KW-0138">CF(0)</keyword>
<keyword id="KW-0375">Hydrogen ion transport</keyword>
<keyword id="KW-0406">Ion transport</keyword>
<keyword id="KW-0472">Membrane</keyword>
<keyword id="KW-1185">Reference proteome</keyword>
<keyword id="KW-0812">Transmembrane</keyword>
<keyword id="KW-1133">Transmembrane helix</keyword>
<keyword id="KW-0813">Transport</keyword>
<dbReference type="EMBL" id="AM286690">
    <property type="protein sequence ID" value="CAL18178.1"/>
    <property type="molecule type" value="Genomic_DNA"/>
</dbReference>
<dbReference type="RefSeq" id="WP_011590001.1">
    <property type="nucleotide sequence ID" value="NC_008260.1"/>
</dbReference>
<dbReference type="SMR" id="Q0VKX0"/>
<dbReference type="STRING" id="393595.ABO_2730"/>
<dbReference type="KEGG" id="abo:ABO_2730"/>
<dbReference type="eggNOG" id="COG0711">
    <property type="taxonomic scope" value="Bacteria"/>
</dbReference>
<dbReference type="HOGENOM" id="CLU_079215_4_5_6"/>
<dbReference type="OrthoDB" id="9788020at2"/>
<dbReference type="Proteomes" id="UP000008871">
    <property type="component" value="Chromosome"/>
</dbReference>
<dbReference type="GO" id="GO:0005886">
    <property type="term" value="C:plasma membrane"/>
    <property type="evidence" value="ECO:0007669"/>
    <property type="project" value="UniProtKB-SubCell"/>
</dbReference>
<dbReference type="GO" id="GO:0045259">
    <property type="term" value="C:proton-transporting ATP synthase complex"/>
    <property type="evidence" value="ECO:0007669"/>
    <property type="project" value="UniProtKB-KW"/>
</dbReference>
<dbReference type="GO" id="GO:0046933">
    <property type="term" value="F:proton-transporting ATP synthase activity, rotational mechanism"/>
    <property type="evidence" value="ECO:0007669"/>
    <property type="project" value="UniProtKB-UniRule"/>
</dbReference>
<dbReference type="GO" id="GO:0046961">
    <property type="term" value="F:proton-transporting ATPase activity, rotational mechanism"/>
    <property type="evidence" value="ECO:0007669"/>
    <property type="project" value="TreeGrafter"/>
</dbReference>
<dbReference type="CDD" id="cd06503">
    <property type="entry name" value="ATP-synt_Fo_b"/>
    <property type="match status" value="1"/>
</dbReference>
<dbReference type="FunFam" id="1.20.5.620:FF:000001">
    <property type="entry name" value="ATP synthase subunit b"/>
    <property type="match status" value="1"/>
</dbReference>
<dbReference type="Gene3D" id="1.20.5.620">
    <property type="entry name" value="F1F0 ATP synthase subunit B, membrane domain"/>
    <property type="match status" value="1"/>
</dbReference>
<dbReference type="HAMAP" id="MF_01398">
    <property type="entry name" value="ATP_synth_b_bprime"/>
    <property type="match status" value="1"/>
</dbReference>
<dbReference type="InterPro" id="IPR028987">
    <property type="entry name" value="ATP_synth_B-like_membr_sf"/>
</dbReference>
<dbReference type="InterPro" id="IPR002146">
    <property type="entry name" value="ATP_synth_b/b'su_bac/chlpt"/>
</dbReference>
<dbReference type="InterPro" id="IPR005864">
    <property type="entry name" value="ATP_synth_F0_bsu_bac"/>
</dbReference>
<dbReference type="InterPro" id="IPR050059">
    <property type="entry name" value="ATP_synthase_B_chain"/>
</dbReference>
<dbReference type="NCBIfam" id="TIGR01144">
    <property type="entry name" value="ATP_synt_b"/>
    <property type="match status" value="1"/>
</dbReference>
<dbReference type="NCBIfam" id="NF004411">
    <property type="entry name" value="PRK05759.1-2"/>
    <property type="match status" value="1"/>
</dbReference>
<dbReference type="PANTHER" id="PTHR33445:SF1">
    <property type="entry name" value="ATP SYNTHASE SUBUNIT B"/>
    <property type="match status" value="1"/>
</dbReference>
<dbReference type="PANTHER" id="PTHR33445">
    <property type="entry name" value="ATP SYNTHASE SUBUNIT B', CHLOROPLASTIC"/>
    <property type="match status" value="1"/>
</dbReference>
<dbReference type="Pfam" id="PF00430">
    <property type="entry name" value="ATP-synt_B"/>
    <property type="match status" value="1"/>
</dbReference>
<dbReference type="SUPFAM" id="SSF81573">
    <property type="entry name" value="F1F0 ATP synthase subunit B, membrane domain"/>
    <property type="match status" value="1"/>
</dbReference>
<name>ATPF_ALCBS</name>
<feature type="chain" id="PRO_0000368303" description="ATP synthase subunit b">
    <location>
        <begin position="1"/>
        <end position="156"/>
    </location>
</feature>
<feature type="transmembrane region" description="Helical" evidence="1">
    <location>
        <begin position="7"/>
        <end position="27"/>
    </location>
</feature>
<organism>
    <name type="scientific">Alcanivorax borkumensis (strain ATCC 700651 / DSM 11573 / NCIMB 13689 / SK2)</name>
    <dbReference type="NCBI Taxonomy" id="393595"/>
    <lineage>
        <taxon>Bacteria</taxon>
        <taxon>Pseudomonadati</taxon>
        <taxon>Pseudomonadota</taxon>
        <taxon>Gammaproteobacteria</taxon>
        <taxon>Oceanospirillales</taxon>
        <taxon>Alcanivoracaceae</taxon>
        <taxon>Alcanivorax</taxon>
    </lineage>
</organism>
<protein>
    <recommendedName>
        <fullName evidence="1">ATP synthase subunit b</fullName>
    </recommendedName>
    <alternativeName>
        <fullName evidence="1">ATP synthase F(0) sector subunit b</fullName>
    </alternativeName>
    <alternativeName>
        <fullName evidence="1">ATPase subunit I</fullName>
    </alternativeName>
    <alternativeName>
        <fullName evidence="1">F-type ATPase subunit b</fullName>
        <shortName evidence="1">F-ATPase subunit b</shortName>
    </alternativeName>
</protein>
<sequence length="156" mass="17378">MNINATLIGQAIWFALFVFFCMKFVWPPISRALDERKQKIAEGLSAADRAERDLELAQEKATANLKESKEKAAEIIDQANRRANQIVEEAKDAARAEGERLIAKAHSEIDQEVNQAREQLRKDVAVLALSGAEKVLGGEVNQDKHTQLLEQLAAEL</sequence>
<comment type="function">
    <text evidence="1">F(1)F(0) ATP synthase produces ATP from ADP in the presence of a proton or sodium gradient. F-type ATPases consist of two structural domains, F(1) containing the extramembraneous catalytic core and F(0) containing the membrane proton channel, linked together by a central stalk and a peripheral stalk. During catalysis, ATP synthesis in the catalytic domain of F(1) is coupled via a rotary mechanism of the central stalk subunits to proton translocation.</text>
</comment>
<comment type="function">
    <text evidence="1">Component of the F(0) channel, it forms part of the peripheral stalk, linking F(1) to F(0).</text>
</comment>
<comment type="subunit">
    <text evidence="1">F-type ATPases have 2 components, F(1) - the catalytic core - and F(0) - the membrane proton channel. F(1) has five subunits: alpha(3), beta(3), gamma(1), delta(1), epsilon(1). F(0) has three main subunits: a(1), b(2) and c(10-14). The alpha and beta chains form an alternating ring which encloses part of the gamma chain. F(1) is attached to F(0) by a central stalk formed by the gamma and epsilon chains, while a peripheral stalk is formed by the delta and b chains.</text>
</comment>
<comment type="subcellular location">
    <subcellularLocation>
        <location evidence="1">Cell inner membrane</location>
        <topology evidence="1">Single-pass membrane protein</topology>
    </subcellularLocation>
</comment>
<comment type="similarity">
    <text evidence="1">Belongs to the ATPase B chain family.</text>
</comment>
<gene>
    <name evidence="1" type="primary">atpF</name>
    <name type="ordered locus">ABO_2730</name>
</gene>
<reference key="1">
    <citation type="journal article" date="2006" name="Nat. Biotechnol.">
        <title>Genome sequence of the ubiquitous hydrocarbon-degrading marine bacterium Alcanivorax borkumensis.</title>
        <authorList>
            <person name="Schneiker S."/>
            <person name="Martins dos Santos V.A.P."/>
            <person name="Bartels D."/>
            <person name="Bekel T."/>
            <person name="Brecht M."/>
            <person name="Buhrmester J."/>
            <person name="Chernikova T.N."/>
            <person name="Denaro R."/>
            <person name="Ferrer M."/>
            <person name="Gertler C."/>
            <person name="Goesmann A."/>
            <person name="Golyshina O.V."/>
            <person name="Kaminski F."/>
            <person name="Khachane A.N."/>
            <person name="Lang S."/>
            <person name="Linke B."/>
            <person name="McHardy A.C."/>
            <person name="Meyer F."/>
            <person name="Nechitaylo T."/>
            <person name="Puehler A."/>
            <person name="Regenhardt D."/>
            <person name="Rupp O."/>
            <person name="Sabirova J.S."/>
            <person name="Selbitschka W."/>
            <person name="Yakimov M.M."/>
            <person name="Timmis K.N."/>
            <person name="Vorhoelter F.-J."/>
            <person name="Weidner S."/>
            <person name="Kaiser O."/>
            <person name="Golyshin P.N."/>
        </authorList>
    </citation>
    <scope>NUCLEOTIDE SEQUENCE [LARGE SCALE GENOMIC DNA]</scope>
    <source>
        <strain>ATCC 700651 / DSM 11573 / NCIMB 13689 / SK2</strain>
    </source>
</reference>
<evidence type="ECO:0000255" key="1">
    <source>
        <dbReference type="HAMAP-Rule" id="MF_01398"/>
    </source>
</evidence>
<accession>Q0VKX0</accession>
<proteinExistence type="inferred from homology"/>